<accession>Q1E7G6</accession>
<accession>A0A0D6K9Q4</accession>
<accession>J3KJL2</accession>
<dbReference type="EMBL" id="GG704911">
    <property type="protein sequence ID" value="EAS36143.1"/>
    <property type="molecule type" value="Genomic_DNA"/>
</dbReference>
<dbReference type="RefSeq" id="XP_001247726.1">
    <property type="nucleotide sequence ID" value="XM_001247725.1"/>
</dbReference>
<dbReference type="SMR" id="Q1E7G6"/>
<dbReference type="FunCoup" id="Q1E7G6">
    <property type="interactions" value="24"/>
</dbReference>
<dbReference type="STRING" id="246410.Q1E7G6"/>
<dbReference type="GlyCosmos" id="Q1E7G6">
    <property type="glycosylation" value="9 sites, No reported glycans"/>
</dbReference>
<dbReference type="GeneID" id="4567659"/>
<dbReference type="KEGG" id="cim:CIMG_01497"/>
<dbReference type="VEuPathDB" id="FungiDB:CIMG_01497"/>
<dbReference type="InParanoid" id="Q1E7G6"/>
<dbReference type="OMA" id="NVFGWVN"/>
<dbReference type="OrthoDB" id="5356111at2759"/>
<dbReference type="Proteomes" id="UP000001261">
    <property type="component" value="Unassembled WGS sequence"/>
</dbReference>
<dbReference type="GO" id="GO:0043332">
    <property type="term" value="C:mating projection tip"/>
    <property type="evidence" value="ECO:0007669"/>
    <property type="project" value="InterPro"/>
</dbReference>
<dbReference type="GO" id="GO:0005886">
    <property type="term" value="C:plasma membrane"/>
    <property type="evidence" value="ECO:0007669"/>
    <property type="project" value="UniProtKB-SubCell"/>
</dbReference>
<dbReference type="GO" id="GO:0032220">
    <property type="term" value="P:plasma membrane fusion involved in cytogamy"/>
    <property type="evidence" value="ECO:0007669"/>
    <property type="project" value="TreeGrafter"/>
</dbReference>
<dbReference type="InterPro" id="IPR026777">
    <property type="entry name" value="PRM1"/>
</dbReference>
<dbReference type="PANTHER" id="PTHR31030">
    <property type="entry name" value="PLASMA MEMBRANE FUSION PROTEIN PRM1"/>
    <property type="match status" value="1"/>
</dbReference>
<dbReference type="PANTHER" id="PTHR31030:SF1">
    <property type="entry name" value="PLASMA MEMBRANE FUSION PROTEIN PRM1"/>
    <property type="match status" value="1"/>
</dbReference>
<reference key="1">
    <citation type="journal article" date="2009" name="Genome Res.">
        <title>Comparative genomic analyses of the human fungal pathogens Coccidioides and their relatives.</title>
        <authorList>
            <person name="Sharpton T.J."/>
            <person name="Stajich J.E."/>
            <person name="Rounsley S.D."/>
            <person name="Gardner M.J."/>
            <person name="Wortman J.R."/>
            <person name="Jordar V.S."/>
            <person name="Maiti R."/>
            <person name="Kodira C.D."/>
            <person name="Neafsey D.E."/>
            <person name="Zeng Q."/>
            <person name="Hung C.-Y."/>
            <person name="McMahan C."/>
            <person name="Muszewska A."/>
            <person name="Grynberg M."/>
            <person name="Mandel M.A."/>
            <person name="Kellner E.M."/>
            <person name="Barker B.M."/>
            <person name="Galgiani J.N."/>
            <person name="Orbach M.J."/>
            <person name="Kirkland T.N."/>
            <person name="Cole G.T."/>
            <person name="Henn M.R."/>
            <person name="Birren B.W."/>
            <person name="Taylor J.W."/>
        </authorList>
    </citation>
    <scope>NUCLEOTIDE SEQUENCE [LARGE SCALE GENOMIC DNA]</scope>
    <source>
        <strain>RS</strain>
    </source>
</reference>
<reference key="2">
    <citation type="journal article" date="2010" name="Genome Res.">
        <title>Population genomic sequencing of Coccidioides fungi reveals recent hybridization and transposon control.</title>
        <authorList>
            <person name="Neafsey D.E."/>
            <person name="Barker B.M."/>
            <person name="Sharpton T.J."/>
            <person name="Stajich J.E."/>
            <person name="Park D.J."/>
            <person name="Whiston E."/>
            <person name="Hung C.-Y."/>
            <person name="McMahan C."/>
            <person name="White J."/>
            <person name="Sykes S."/>
            <person name="Heiman D."/>
            <person name="Young S."/>
            <person name="Zeng Q."/>
            <person name="Abouelleil A."/>
            <person name="Aftuck L."/>
            <person name="Bessette D."/>
            <person name="Brown A."/>
            <person name="FitzGerald M."/>
            <person name="Lui A."/>
            <person name="Macdonald J.P."/>
            <person name="Priest M."/>
            <person name="Orbach M.J."/>
            <person name="Galgiani J.N."/>
            <person name="Kirkland T.N."/>
            <person name="Cole G.T."/>
            <person name="Birren B.W."/>
            <person name="Henn M.R."/>
            <person name="Taylor J.W."/>
            <person name="Rounsley S.D."/>
        </authorList>
    </citation>
    <scope>GENOME REANNOTATION</scope>
    <source>
        <strain>RS</strain>
    </source>
</reference>
<keyword id="KW-1003">Cell membrane</keyword>
<keyword id="KW-0184">Conjugation</keyword>
<keyword id="KW-0325">Glycoprotein</keyword>
<keyword id="KW-0472">Membrane</keyword>
<keyword id="KW-1185">Reference proteome</keyword>
<keyword id="KW-0812">Transmembrane</keyword>
<keyword id="KW-1133">Transmembrane helix</keyword>
<sequence>MQFSRFIPRSSPGLPPYGAHDPPMMQNPAPTTAPPGAITPYLGFKARLSQIWINKWTILLLLVLARVLIAVTGLNDNMASAKREALSACTSVESMGSAMASMPHYMSKGVNELTASGVERAVNGLMSMLLLTVTGVEEVVVFFVNVLTQTYLCLITLAVSGSLHVALKVVEDAADFLNKTLADVTEGIEKGVDGFEDKINDFLKGINSITSAFGGEKDPPKLDIGGDLDKLKEIRLPSSLDEGLKKINDSIPTFDEVNKFANDAIRYPFKEVKKLINQSLEEYKFDRSVFPVPQKEKLSFCGDNDGINSFFGKIGSIISTAKKIFIAVLIAGAVAACVPMALLEIRRWRHMKERASLVQKNDHDPMDVVYIVSRPYTSTAGLKIASWFKPGRRQVLVRWIVAYATTTPALFLLALGIAGLFSCACQAILLHAVKKEVPGLTNEVSQFADKVVMSLNNASEQWAISTNRVIADTNDDINQKVFGWVNTSTTSINDTLNVFVDKTSDVLNDTFGGTILHGPIKDVLYCLIGLKIQGIQKALTWVYDHAHVDFPNMPNDTFSLGAVESIANDNKSDPESFLASPGDKTADAITHVVVRVTEAIENAIRTEALISTFLIALWFAILLIAVLRALTLAFRRDKPRGEGGIDATYHPPAPRAAHAVGSMEMSDFYNVPLTGVPNANGDGGLAPKYSTTPHVRGGSRGSDTDEEEYQAQKLGYAGQRDYEAALNREMCRESSCGQVMYGSEKR</sequence>
<comment type="function">
    <text evidence="1">Involved in cell fusion during mating by stabilizing the plasma membrane fusion event.</text>
</comment>
<comment type="subcellular location">
    <subcellularLocation>
        <location evidence="1">Cell membrane</location>
        <topology evidence="1">Multi-pass membrane protein</topology>
    </subcellularLocation>
</comment>
<comment type="similarity">
    <text evidence="4">Belongs to the PRM1 family.</text>
</comment>
<feature type="chain" id="PRO_0000337277" description="Plasma membrane fusion protein PRM1">
    <location>
        <begin position="1"/>
        <end position="746"/>
    </location>
</feature>
<feature type="topological domain" description="Extracellular" evidence="1">
    <location>
        <begin position="1"/>
        <end position="50"/>
    </location>
</feature>
<feature type="transmembrane region" description="Helical" evidence="2">
    <location>
        <begin position="51"/>
        <end position="71"/>
    </location>
</feature>
<feature type="topological domain" description="Cytoplasmic" evidence="1">
    <location>
        <begin position="72"/>
        <end position="138"/>
    </location>
</feature>
<feature type="transmembrane region" description="Helical" evidence="2">
    <location>
        <begin position="139"/>
        <end position="159"/>
    </location>
</feature>
<feature type="topological domain" description="Extracellular" evidence="1">
    <location>
        <begin position="160"/>
        <end position="323"/>
    </location>
</feature>
<feature type="transmembrane region" description="Helical" evidence="2">
    <location>
        <begin position="324"/>
        <end position="344"/>
    </location>
</feature>
<feature type="topological domain" description="Cytoplasmic" evidence="1">
    <location>
        <begin position="345"/>
        <end position="398"/>
    </location>
</feature>
<feature type="transmembrane region" description="Helical" evidence="2">
    <location>
        <begin position="399"/>
        <end position="421"/>
    </location>
</feature>
<feature type="topological domain" description="Extracellular" evidence="1">
    <location>
        <begin position="422"/>
        <end position="606"/>
    </location>
</feature>
<feature type="transmembrane region" description="Helical" evidence="2">
    <location>
        <begin position="607"/>
        <end position="627"/>
    </location>
</feature>
<feature type="topological domain" description="Cytoplasmic" evidence="1">
    <location>
        <begin position="628"/>
        <end position="746"/>
    </location>
</feature>
<feature type="region of interest" description="Disordered" evidence="3">
    <location>
        <begin position="1"/>
        <end position="32"/>
    </location>
</feature>
<feature type="region of interest" description="Disordered" evidence="3">
    <location>
        <begin position="682"/>
        <end position="708"/>
    </location>
</feature>
<feature type="glycosylation site" description="N-linked (GlcNAc...) asparagine" evidence="2">
    <location>
        <position position="178"/>
    </location>
</feature>
<feature type="glycosylation site" description="N-linked (GlcNAc...) asparagine" evidence="2">
    <location>
        <position position="248"/>
    </location>
</feature>
<feature type="glycosylation site" description="N-linked (GlcNAc...) asparagine" evidence="2">
    <location>
        <position position="277"/>
    </location>
</feature>
<feature type="glycosylation site" description="N-linked (GlcNAc...) asparagine" evidence="2">
    <location>
        <position position="457"/>
    </location>
</feature>
<feature type="glycosylation site" description="N-linked (GlcNAc...) asparagine" evidence="2">
    <location>
        <position position="486"/>
    </location>
</feature>
<feature type="glycosylation site" description="N-linked (GlcNAc...) asparagine" evidence="2">
    <location>
        <position position="493"/>
    </location>
</feature>
<feature type="glycosylation site" description="N-linked (GlcNAc...) asparagine" evidence="2">
    <location>
        <position position="508"/>
    </location>
</feature>
<feature type="glycosylation site" description="N-linked (GlcNAc...) asparagine" evidence="2">
    <location>
        <position position="555"/>
    </location>
</feature>
<feature type="glycosylation site" description="N-linked (GlcNAc...) asparagine" evidence="2">
    <location>
        <position position="570"/>
    </location>
</feature>
<organism>
    <name type="scientific">Coccidioides immitis (strain RS)</name>
    <name type="common">Valley fever fungus</name>
    <dbReference type="NCBI Taxonomy" id="246410"/>
    <lineage>
        <taxon>Eukaryota</taxon>
        <taxon>Fungi</taxon>
        <taxon>Dikarya</taxon>
        <taxon>Ascomycota</taxon>
        <taxon>Pezizomycotina</taxon>
        <taxon>Eurotiomycetes</taxon>
        <taxon>Eurotiomycetidae</taxon>
        <taxon>Onygenales</taxon>
        <taxon>Onygenaceae</taxon>
        <taxon>Coccidioides</taxon>
    </lineage>
</organism>
<protein>
    <recommendedName>
        <fullName>Plasma membrane fusion protein PRM1</fullName>
    </recommendedName>
</protein>
<name>PRM1_COCIM</name>
<proteinExistence type="inferred from homology"/>
<gene>
    <name type="primary">PRM1</name>
    <name type="ORF">CIMG_01497</name>
</gene>
<evidence type="ECO:0000250" key="1"/>
<evidence type="ECO:0000255" key="2"/>
<evidence type="ECO:0000256" key="3">
    <source>
        <dbReference type="SAM" id="MobiDB-lite"/>
    </source>
</evidence>
<evidence type="ECO:0000305" key="4"/>